<reference key="1">
    <citation type="journal article" date="2003" name="Proc. Natl. Acad. Sci. U.S.A.">
        <title>The genome sequence of Clostridium tetani, the causative agent of tetanus disease.</title>
        <authorList>
            <person name="Brueggemann H."/>
            <person name="Baeumer S."/>
            <person name="Fricke W.F."/>
            <person name="Wiezer A."/>
            <person name="Liesegang H."/>
            <person name="Decker I."/>
            <person name="Herzberg C."/>
            <person name="Martinez-Arias R."/>
            <person name="Merkl R."/>
            <person name="Henne A."/>
            <person name="Gottschalk G."/>
        </authorList>
    </citation>
    <scope>NUCLEOTIDE SEQUENCE [LARGE SCALE GENOMIC DNA]</scope>
    <source>
        <strain>Massachusetts / E88</strain>
    </source>
</reference>
<keyword id="KW-1003">Cell membrane</keyword>
<keyword id="KW-0472">Membrane</keyword>
<keyword id="KW-1185">Reference proteome</keyword>
<keyword id="KW-0812">Transmembrane</keyword>
<keyword id="KW-1133">Transmembrane helix</keyword>
<feature type="chain" id="PRO_0000157408" description="UPF0324 membrane protein CTC_01844">
    <location>
        <begin position="1"/>
        <end position="345"/>
    </location>
</feature>
<feature type="transmembrane region" description="Helical" evidence="1">
    <location>
        <begin position="7"/>
        <end position="24"/>
    </location>
</feature>
<feature type="transmembrane region" description="Helical" evidence="1">
    <location>
        <begin position="28"/>
        <end position="50"/>
    </location>
</feature>
<feature type="transmembrane region" description="Helical" evidence="1">
    <location>
        <begin position="70"/>
        <end position="87"/>
    </location>
</feature>
<feature type="transmembrane region" description="Helical" evidence="1">
    <location>
        <begin position="91"/>
        <end position="113"/>
    </location>
</feature>
<feature type="transmembrane region" description="Helical" evidence="1">
    <location>
        <begin position="120"/>
        <end position="142"/>
    </location>
</feature>
<feature type="transmembrane region" description="Helical" evidence="1">
    <location>
        <begin position="152"/>
        <end position="174"/>
    </location>
</feature>
<feature type="transmembrane region" description="Helical" evidence="1">
    <location>
        <begin position="181"/>
        <end position="203"/>
    </location>
</feature>
<feature type="transmembrane region" description="Helical" evidence="1">
    <location>
        <begin position="209"/>
        <end position="231"/>
    </location>
</feature>
<feature type="transmembrane region" description="Helical" evidence="1">
    <location>
        <begin position="261"/>
        <end position="283"/>
    </location>
</feature>
<feature type="transmembrane region" description="Helical" evidence="1">
    <location>
        <begin position="316"/>
        <end position="338"/>
    </location>
</feature>
<comment type="subcellular location">
    <subcellularLocation>
        <location evidence="2">Cell membrane</location>
        <topology evidence="2">Multi-pass membrane protein</topology>
    </subcellularLocation>
</comment>
<comment type="similarity">
    <text evidence="2">Belongs to the UPF0324 family.</text>
</comment>
<name>Y1844_CLOTE</name>
<gene>
    <name type="ordered locus">CTC_01844</name>
</gene>
<sequence length="345" mass="37345">MLFIKKYSVGILFTAVLAVISGFISNLIPYRLIGAGVFALLIGMFLNPIVSKYTVLNKGLNFTSKKILRLAIILMGITLSFSQVLEVGKYSLIVMVFTLITAFGGGYLLGKLFKMDWKLSGLISAGTGICGGSAIAAISPVIDAEDSDIAYAISATFIFDVIMVILFPIAGKYFNMTDLGYGLWAGTAVNDTSSVVAAGYAFSDVAGNFSVIVKLTRTLSIVPVVLIFSYINERLIRKTKNENFKGNESTYHKDKINISKIFPWFILLFLVMVAIKSTGIIPNTISHFISKLSKFLMVMSLGAIGLKTNFKSLAKSGFAPAVHGFIISLLVVVVSFLVQMTLGQV</sequence>
<dbReference type="EMBL" id="AE015927">
    <property type="protein sequence ID" value="AAO36363.1"/>
    <property type="molecule type" value="Genomic_DNA"/>
</dbReference>
<dbReference type="RefSeq" id="WP_011100023.1">
    <property type="nucleotide sequence ID" value="NC_004557.1"/>
</dbReference>
<dbReference type="STRING" id="212717.CTC_01844"/>
<dbReference type="GeneID" id="24252749"/>
<dbReference type="KEGG" id="ctc:CTC_01844"/>
<dbReference type="HOGENOM" id="CLU_033541_2_1_9"/>
<dbReference type="OrthoDB" id="9811391at2"/>
<dbReference type="Proteomes" id="UP000001412">
    <property type="component" value="Chromosome"/>
</dbReference>
<dbReference type="GO" id="GO:0005886">
    <property type="term" value="C:plasma membrane"/>
    <property type="evidence" value="ECO:0007669"/>
    <property type="project" value="UniProtKB-SubCell"/>
</dbReference>
<dbReference type="InterPro" id="IPR018383">
    <property type="entry name" value="UPF0324_pro"/>
</dbReference>
<dbReference type="PANTHER" id="PTHR30106">
    <property type="entry name" value="INNER MEMBRANE PROTEIN YEIH-RELATED"/>
    <property type="match status" value="1"/>
</dbReference>
<dbReference type="PANTHER" id="PTHR30106:SF1">
    <property type="entry name" value="UPF0324 MEMBRANE PROTEIN FN0533"/>
    <property type="match status" value="1"/>
</dbReference>
<dbReference type="Pfam" id="PF03601">
    <property type="entry name" value="Cons_hypoth698"/>
    <property type="match status" value="1"/>
</dbReference>
<accession>Q893H9</accession>
<proteinExistence type="inferred from homology"/>
<protein>
    <recommendedName>
        <fullName>UPF0324 membrane protein CTC_01844</fullName>
    </recommendedName>
</protein>
<organism>
    <name type="scientific">Clostridium tetani (strain Massachusetts / E88)</name>
    <dbReference type="NCBI Taxonomy" id="212717"/>
    <lineage>
        <taxon>Bacteria</taxon>
        <taxon>Bacillati</taxon>
        <taxon>Bacillota</taxon>
        <taxon>Clostridia</taxon>
        <taxon>Eubacteriales</taxon>
        <taxon>Clostridiaceae</taxon>
        <taxon>Clostridium</taxon>
    </lineage>
</organism>
<evidence type="ECO:0000255" key="1"/>
<evidence type="ECO:0000305" key="2"/>